<reference key="1">
    <citation type="journal article" date="2004" name="Science">
        <title>Illuminating the evolutionary history of chlamydiae.</title>
        <authorList>
            <person name="Horn M."/>
            <person name="Collingro A."/>
            <person name="Schmitz-Esser S."/>
            <person name="Beier C.L."/>
            <person name="Purkhold U."/>
            <person name="Fartmann B."/>
            <person name="Brandt P."/>
            <person name="Nyakatura G.J."/>
            <person name="Droege M."/>
            <person name="Frishman D."/>
            <person name="Rattei T."/>
            <person name="Mewes H.-W."/>
            <person name="Wagner M."/>
        </authorList>
    </citation>
    <scope>NUCLEOTIDE SEQUENCE [LARGE SCALE GENOMIC DNA]</scope>
    <source>
        <strain>UWE25</strain>
    </source>
</reference>
<proteinExistence type="inferred from homology"/>
<dbReference type="EMBL" id="BX908798">
    <property type="protein sequence ID" value="CAF24523.1"/>
    <property type="molecule type" value="Genomic_DNA"/>
</dbReference>
<dbReference type="RefSeq" id="WP_011176344.1">
    <property type="nucleotide sequence ID" value="NC_005861.2"/>
</dbReference>
<dbReference type="SMR" id="Q6MA76"/>
<dbReference type="STRING" id="264201.pc1799"/>
<dbReference type="KEGG" id="pcu:PC_RS08620"/>
<dbReference type="eggNOG" id="COG1327">
    <property type="taxonomic scope" value="Bacteria"/>
</dbReference>
<dbReference type="HOGENOM" id="CLU_108412_0_0_0"/>
<dbReference type="OrthoDB" id="9807461at2"/>
<dbReference type="Proteomes" id="UP000000529">
    <property type="component" value="Chromosome"/>
</dbReference>
<dbReference type="GO" id="GO:0005524">
    <property type="term" value="F:ATP binding"/>
    <property type="evidence" value="ECO:0007669"/>
    <property type="project" value="UniProtKB-KW"/>
</dbReference>
<dbReference type="GO" id="GO:0003677">
    <property type="term" value="F:DNA binding"/>
    <property type="evidence" value="ECO:0007669"/>
    <property type="project" value="UniProtKB-KW"/>
</dbReference>
<dbReference type="GO" id="GO:0008270">
    <property type="term" value="F:zinc ion binding"/>
    <property type="evidence" value="ECO:0007669"/>
    <property type="project" value="UniProtKB-UniRule"/>
</dbReference>
<dbReference type="GO" id="GO:0045892">
    <property type="term" value="P:negative regulation of DNA-templated transcription"/>
    <property type="evidence" value="ECO:0007669"/>
    <property type="project" value="UniProtKB-UniRule"/>
</dbReference>
<dbReference type="HAMAP" id="MF_00440">
    <property type="entry name" value="NrdR"/>
    <property type="match status" value="1"/>
</dbReference>
<dbReference type="InterPro" id="IPR005144">
    <property type="entry name" value="ATP-cone_dom"/>
</dbReference>
<dbReference type="InterPro" id="IPR055173">
    <property type="entry name" value="NrdR-like_N"/>
</dbReference>
<dbReference type="InterPro" id="IPR003796">
    <property type="entry name" value="RNR_NrdR-like"/>
</dbReference>
<dbReference type="NCBIfam" id="TIGR00244">
    <property type="entry name" value="transcriptional regulator NrdR"/>
    <property type="match status" value="1"/>
</dbReference>
<dbReference type="PANTHER" id="PTHR30455">
    <property type="entry name" value="TRANSCRIPTIONAL REPRESSOR NRDR"/>
    <property type="match status" value="1"/>
</dbReference>
<dbReference type="PANTHER" id="PTHR30455:SF2">
    <property type="entry name" value="TRANSCRIPTIONAL REPRESSOR NRDR"/>
    <property type="match status" value="1"/>
</dbReference>
<dbReference type="Pfam" id="PF03477">
    <property type="entry name" value="ATP-cone"/>
    <property type="match status" value="1"/>
</dbReference>
<dbReference type="Pfam" id="PF22811">
    <property type="entry name" value="Zn_ribbon_NrdR"/>
    <property type="match status" value="1"/>
</dbReference>
<dbReference type="PROSITE" id="PS51161">
    <property type="entry name" value="ATP_CONE"/>
    <property type="match status" value="1"/>
</dbReference>
<feature type="chain" id="PRO_0000264195" description="Transcriptional repressor NrdR">
    <location>
        <begin position="1"/>
        <end position="162"/>
    </location>
</feature>
<feature type="domain" description="ATP-cone" evidence="1">
    <location>
        <begin position="48"/>
        <end position="138"/>
    </location>
</feature>
<feature type="zinc finger region" evidence="1">
    <location>
        <begin position="3"/>
        <end position="34"/>
    </location>
</feature>
<evidence type="ECO:0000255" key="1">
    <source>
        <dbReference type="HAMAP-Rule" id="MF_00440"/>
    </source>
</evidence>
<gene>
    <name evidence="1" type="primary">nrdR</name>
    <name type="ordered locus">pc1799</name>
</gene>
<protein>
    <recommendedName>
        <fullName evidence="1">Transcriptional repressor NrdR</fullName>
    </recommendedName>
</protein>
<keyword id="KW-0067">ATP-binding</keyword>
<keyword id="KW-0238">DNA-binding</keyword>
<keyword id="KW-0479">Metal-binding</keyword>
<keyword id="KW-0547">Nucleotide-binding</keyword>
<keyword id="KW-1185">Reference proteome</keyword>
<keyword id="KW-0678">Repressor</keyword>
<keyword id="KW-0804">Transcription</keyword>
<keyword id="KW-0805">Transcription regulation</keyword>
<keyword id="KW-0862">Zinc</keyword>
<keyword id="KW-0863">Zinc-finger</keyword>
<name>NRDR_PARUW</name>
<organism>
    <name type="scientific">Protochlamydia amoebophila (strain UWE25)</name>
    <dbReference type="NCBI Taxonomy" id="264201"/>
    <lineage>
        <taxon>Bacteria</taxon>
        <taxon>Pseudomonadati</taxon>
        <taxon>Chlamydiota</taxon>
        <taxon>Chlamydiia</taxon>
        <taxon>Parachlamydiales</taxon>
        <taxon>Parachlamydiaceae</taxon>
        <taxon>Candidatus Protochlamydia</taxon>
    </lineage>
</organism>
<accession>Q6MA76</accession>
<sequence>MRCPFCQFEGLKVTDSRDAMEMNAIRRRRECLNCLKRFTTFETIELTVQVQKRDGTYEDFQQHKLINGLAAACRHTKISHDQVISLAAQMTNELMQSQIQQISTTQLGEMAMKHLQSLDPIAYIRFACVYKRFKDLGELEEAIKTIQSKDEDKSCSILKDLL</sequence>
<comment type="function">
    <text evidence="1">Negatively regulates transcription of bacterial ribonucleotide reductase nrd genes and operons by binding to NrdR-boxes.</text>
</comment>
<comment type="cofactor">
    <cofactor evidence="1">
        <name>Zn(2+)</name>
        <dbReference type="ChEBI" id="CHEBI:29105"/>
    </cofactor>
    <text evidence="1">Binds 1 zinc ion.</text>
</comment>
<comment type="similarity">
    <text evidence="1">Belongs to the NrdR family.</text>
</comment>